<reference key="1">
    <citation type="journal article" date="2000" name="Nature">
        <title>Sequence and analysis of chromosome 1 of the plant Arabidopsis thaliana.</title>
        <authorList>
            <person name="Theologis A."/>
            <person name="Ecker J.R."/>
            <person name="Palm C.J."/>
            <person name="Federspiel N.A."/>
            <person name="Kaul S."/>
            <person name="White O."/>
            <person name="Alonso J."/>
            <person name="Altafi H."/>
            <person name="Araujo R."/>
            <person name="Bowman C.L."/>
            <person name="Brooks S.Y."/>
            <person name="Buehler E."/>
            <person name="Chan A."/>
            <person name="Chao Q."/>
            <person name="Chen H."/>
            <person name="Cheuk R.F."/>
            <person name="Chin C.W."/>
            <person name="Chung M.K."/>
            <person name="Conn L."/>
            <person name="Conway A.B."/>
            <person name="Conway A.R."/>
            <person name="Creasy T.H."/>
            <person name="Dewar K."/>
            <person name="Dunn P."/>
            <person name="Etgu P."/>
            <person name="Feldblyum T.V."/>
            <person name="Feng J.-D."/>
            <person name="Fong B."/>
            <person name="Fujii C.Y."/>
            <person name="Gill J.E."/>
            <person name="Goldsmith A.D."/>
            <person name="Haas B."/>
            <person name="Hansen N.F."/>
            <person name="Hughes B."/>
            <person name="Huizar L."/>
            <person name="Hunter J.L."/>
            <person name="Jenkins J."/>
            <person name="Johnson-Hopson C."/>
            <person name="Khan S."/>
            <person name="Khaykin E."/>
            <person name="Kim C.J."/>
            <person name="Koo H.L."/>
            <person name="Kremenetskaia I."/>
            <person name="Kurtz D.B."/>
            <person name="Kwan A."/>
            <person name="Lam B."/>
            <person name="Langin-Hooper S."/>
            <person name="Lee A."/>
            <person name="Lee J.M."/>
            <person name="Lenz C.A."/>
            <person name="Li J.H."/>
            <person name="Li Y.-P."/>
            <person name="Lin X."/>
            <person name="Liu S.X."/>
            <person name="Liu Z.A."/>
            <person name="Luros J.S."/>
            <person name="Maiti R."/>
            <person name="Marziali A."/>
            <person name="Militscher J."/>
            <person name="Miranda M."/>
            <person name="Nguyen M."/>
            <person name="Nierman W.C."/>
            <person name="Osborne B.I."/>
            <person name="Pai G."/>
            <person name="Peterson J."/>
            <person name="Pham P.K."/>
            <person name="Rizzo M."/>
            <person name="Rooney T."/>
            <person name="Rowley D."/>
            <person name="Sakano H."/>
            <person name="Salzberg S.L."/>
            <person name="Schwartz J.R."/>
            <person name="Shinn P."/>
            <person name="Southwick A.M."/>
            <person name="Sun H."/>
            <person name="Tallon L.J."/>
            <person name="Tambunga G."/>
            <person name="Toriumi M.J."/>
            <person name="Town C.D."/>
            <person name="Utterback T."/>
            <person name="Van Aken S."/>
            <person name="Vaysberg M."/>
            <person name="Vysotskaia V.S."/>
            <person name="Walker M."/>
            <person name="Wu D."/>
            <person name="Yu G."/>
            <person name="Fraser C.M."/>
            <person name="Venter J.C."/>
            <person name="Davis R.W."/>
        </authorList>
    </citation>
    <scope>NUCLEOTIDE SEQUENCE [LARGE SCALE GENOMIC DNA]</scope>
    <source>
        <strain>cv. Columbia</strain>
    </source>
</reference>
<reference key="2">
    <citation type="journal article" date="2017" name="Plant J.">
        <title>Araport11: a complete reannotation of the Arabidopsis thaliana reference genome.</title>
        <authorList>
            <person name="Cheng C.Y."/>
            <person name="Krishnakumar V."/>
            <person name="Chan A.P."/>
            <person name="Thibaud-Nissen F."/>
            <person name="Schobel S."/>
            <person name="Town C.D."/>
        </authorList>
    </citation>
    <scope>GENOME REANNOTATION</scope>
    <source>
        <strain>cv. Columbia</strain>
    </source>
</reference>
<reference key="3">
    <citation type="journal article" date="2002" name="Science">
        <title>Functional annotation of a full-length Arabidopsis cDNA collection.</title>
        <authorList>
            <person name="Seki M."/>
            <person name="Narusaka M."/>
            <person name="Kamiya A."/>
            <person name="Ishida J."/>
            <person name="Satou M."/>
            <person name="Sakurai T."/>
            <person name="Nakajima M."/>
            <person name="Enju A."/>
            <person name="Akiyama K."/>
            <person name="Oono Y."/>
            <person name="Muramatsu M."/>
            <person name="Hayashizaki Y."/>
            <person name="Kawai J."/>
            <person name="Carninci P."/>
            <person name="Itoh M."/>
            <person name="Ishii Y."/>
            <person name="Arakawa T."/>
            <person name="Shibata K."/>
            <person name="Shinagawa A."/>
            <person name="Shinozaki K."/>
        </authorList>
    </citation>
    <scope>NUCLEOTIDE SEQUENCE [LARGE SCALE MRNA]</scope>
    <source>
        <strain>cv. Columbia</strain>
    </source>
</reference>
<reference key="4">
    <citation type="submission" date="2007-01" db="EMBL/GenBank/DDBJ databases">
        <title>Arabidopsis ORF clones.</title>
        <authorList>
            <person name="Kim C.J."/>
            <person name="Bautista V.R."/>
            <person name="Chen H."/>
            <person name="De Los Reyes C."/>
            <person name="Wu S.Y."/>
            <person name="Ecker J.R."/>
        </authorList>
    </citation>
    <scope>NUCLEOTIDE SEQUENCE [LARGE SCALE MRNA]</scope>
    <source>
        <strain>cv. Columbia</strain>
    </source>
</reference>
<reference key="5">
    <citation type="journal article" date="2006" name="Plant Mol. Biol.">
        <title>The Arabidopsis AtDi19 gene family encodes a novel type of Cys2/His2 zinc-finger protein implicated in ABA-independent dehydration, high-salinity stress and light signaling pathways.</title>
        <authorList>
            <person name="Rodriguez Milla M.A."/>
            <person name="Townsend J."/>
            <person name="Chang I.-F."/>
            <person name="Cushman J.C."/>
        </authorList>
    </citation>
    <scope>SUBCELLULAR LOCATION</scope>
    <scope>TISSUE SPECIFICITY</scope>
    <scope>LACK OF IN VITRO PHOSPHORYLATION</scope>
    <scope>INDUCTION BY SALT</scope>
    <scope>GENE FAMILY</scope>
    <scope>NOMENCLATURE</scope>
</reference>
<sequence>MEDDMWCVSSSGSSRSYRSETAAKYQSGPYQDLEEFEEVDDDIAVEYPCPFCASDYDLVELCHHIDEEHRHEANNGICPVCSKRVKMHMVDHITSHHRDVLKSEQKEMSYREDPYLSDKYLQPHLDELPPSMNHHQHPSKHVSDQFLSFINNSALPNQTKLVLPDSSVEDKNPIKDSSAAKEGTSSCPLSDSDKLEKAKKCEFVQGLLSSAMFDDECDSSE</sequence>
<name>DI192_ARATH</name>
<feature type="chain" id="PRO_0000304414" description="Protein DEHYDRATION-INDUCED 19 homolog 2">
    <location>
        <begin position="1"/>
        <end position="221"/>
    </location>
</feature>
<feature type="region of interest" description="Disordered" evidence="1">
    <location>
        <begin position="1"/>
        <end position="24"/>
    </location>
</feature>
<feature type="region of interest" description="Disordered" evidence="1">
    <location>
        <begin position="162"/>
        <end position="193"/>
    </location>
</feature>
<gene>
    <name type="primary">DI19-2</name>
    <name type="ordered locus">At1g02750</name>
    <name type="ORF">F22D16.28</name>
    <name type="ORF">T14P4.5</name>
</gene>
<organism>
    <name type="scientific">Arabidopsis thaliana</name>
    <name type="common">Mouse-ear cress</name>
    <dbReference type="NCBI Taxonomy" id="3702"/>
    <lineage>
        <taxon>Eukaryota</taxon>
        <taxon>Viridiplantae</taxon>
        <taxon>Streptophyta</taxon>
        <taxon>Embryophyta</taxon>
        <taxon>Tracheophyta</taxon>
        <taxon>Spermatophyta</taxon>
        <taxon>Magnoliopsida</taxon>
        <taxon>eudicotyledons</taxon>
        <taxon>Gunneridae</taxon>
        <taxon>Pentapetalae</taxon>
        <taxon>rosids</taxon>
        <taxon>malvids</taxon>
        <taxon>Brassicales</taxon>
        <taxon>Brassicaceae</taxon>
        <taxon>Camelineae</taxon>
        <taxon>Arabidopsis</taxon>
    </lineage>
</organism>
<comment type="subcellular location">
    <subcellularLocation>
        <location evidence="2">Cytoplasm</location>
    </subcellularLocation>
    <subcellularLocation>
        <location evidence="2">Nucleus</location>
    </subcellularLocation>
</comment>
<comment type="alternative products">
    <event type="alternative splicing"/>
    <isoform>
        <id>Q8GWK1-1</id>
        <name>1</name>
        <sequence type="displayed"/>
    </isoform>
    <text>A number of isoforms are produced. According to EST sequences.</text>
</comment>
<comment type="tissue specificity">
    <text evidence="2">Expressed in seedlings, roots, leaves, stems, flowers and siliques.</text>
</comment>
<comment type="induction">
    <text evidence="2">By high-salt stress, but not by abscisic acid.</text>
</comment>
<comment type="PTM">
    <text>Not phosphorylated in vitro by CPK3 or CPK11.</text>
</comment>
<comment type="similarity">
    <text evidence="3">Belongs to the Di19 family.</text>
</comment>
<protein>
    <recommendedName>
        <fullName>Protein DEHYDRATION-INDUCED 19 homolog 2</fullName>
        <shortName>AtDi19-2</shortName>
    </recommendedName>
</protein>
<keyword id="KW-0025">Alternative splicing</keyword>
<keyword id="KW-0963">Cytoplasm</keyword>
<keyword id="KW-0539">Nucleus</keyword>
<keyword id="KW-1185">Reference proteome</keyword>
<dbReference type="EMBL" id="AC009525">
    <property type="status" value="NOT_ANNOTATED_CDS"/>
    <property type="molecule type" value="Genomic_DNA"/>
</dbReference>
<dbReference type="EMBL" id="AC022521">
    <property type="status" value="NOT_ANNOTATED_CDS"/>
    <property type="molecule type" value="Genomic_DNA"/>
</dbReference>
<dbReference type="EMBL" id="CP002684">
    <property type="protein sequence ID" value="AEE27466.1"/>
    <property type="molecule type" value="Genomic_DNA"/>
</dbReference>
<dbReference type="EMBL" id="AK118790">
    <property type="protein sequence ID" value="BAC43381.1"/>
    <property type="molecule type" value="mRNA"/>
</dbReference>
<dbReference type="EMBL" id="BT030081">
    <property type="protein sequence ID" value="ABN04819.1"/>
    <property type="molecule type" value="mRNA"/>
</dbReference>
<dbReference type="RefSeq" id="NP_171775.2">
    <molecule id="Q8GWK1-1"/>
    <property type="nucleotide sequence ID" value="NM_100155.4"/>
</dbReference>
<dbReference type="BioGRID" id="24667">
    <property type="interactions" value="1"/>
</dbReference>
<dbReference type="STRING" id="3702.Q8GWK1"/>
<dbReference type="iPTMnet" id="Q8GWK1"/>
<dbReference type="PaxDb" id="3702-AT1G02750.1"/>
<dbReference type="EnsemblPlants" id="AT1G02750.1">
    <molecule id="Q8GWK1-1"/>
    <property type="protein sequence ID" value="AT1G02750.1"/>
    <property type="gene ID" value="AT1G02750"/>
</dbReference>
<dbReference type="GeneID" id="839432"/>
<dbReference type="Gramene" id="AT1G02750.1">
    <molecule id="Q8GWK1-1"/>
    <property type="protein sequence ID" value="AT1G02750.1"/>
    <property type="gene ID" value="AT1G02750"/>
</dbReference>
<dbReference type="KEGG" id="ath:AT1G02750"/>
<dbReference type="Araport" id="AT1G02750"/>
<dbReference type="TAIR" id="AT1G02750"/>
<dbReference type="eggNOG" id="ENOG502SN10">
    <property type="taxonomic scope" value="Eukaryota"/>
</dbReference>
<dbReference type="HOGENOM" id="CLU_072240_0_1_1"/>
<dbReference type="InParanoid" id="Q8GWK1"/>
<dbReference type="OMA" id="VEVEYPC"/>
<dbReference type="PhylomeDB" id="Q8GWK1"/>
<dbReference type="PRO" id="PR:Q8GWK1"/>
<dbReference type="Proteomes" id="UP000006548">
    <property type="component" value="Chromosome 1"/>
</dbReference>
<dbReference type="ExpressionAtlas" id="Q8GWK1">
    <property type="expression patterns" value="baseline and differential"/>
</dbReference>
<dbReference type="GO" id="GO:0005737">
    <property type="term" value="C:cytoplasm"/>
    <property type="evidence" value="ECO:0007669"/>
    <property type="project" value="UniProtKB-SubCell"/>
</dbReference>
<dbReference type="GO" id="GO:0005634">
    <property type="term" value="C:nucleus"/>
    <property type="evidence" value="ECO:0000314"/>
    <property type="project" value="TAIR"/>
</dbReference>
<dbReference type="InterPro" id="IPR033347">
    <property type="entry name" value="DI19"/>
</dbReference>
<dbReference type="InterPro" id="IPR027935">
    <property type="entry name" value="Di19_C"/>
</dbReference>
<dbReference type="InterPro" id="IPR008598">
    <property type="entry name" value="Di19_Zn-bd"/>
</dbReference>
<dbReference type="PANTHER" id="PTHR31875">
    <property type="entry name" value="PROTEIN DEHYDRATION-INDUCED 19"/>
    <property type="match status" value="1"/>
</dbReference>
<dbReference type="PANTHER" id="PTHR31875:SF25">
    <property type="entry name" value="PROTEIN DEHYDRATION-INDUCED 19 HOMOLOG 2"/>
    <property type="match status" value="1"/>
</dbReference>
<dbReference type="Pfam" id="PF14571">
    <property type="entry name" value="Di19_C"/>
    <property type="match status" value="1"/>
</dbReference>
<dbReference type="Pfam" id="PF05605">
    <property type="entry name" value="zf-Di19"/>
    <property type="match status" value="1"/>
</dbReference>
<evidence type="ECO:0000256" key="1">
    <source>
        <dbReference type="SAM" id="MobiDB-lite"/>
    </source>
</evidence>
<evidence type="ECO:0000269" key="2">
    <source>
    </source>
</evidence>
<evidence type="ECO:0000305" key="3"/>
<proteinExistence type="evidence at protein level"/>
<accession>Q8GWK1</accession>